<name>RS3_ALISL</name>
<evidence type="ECO:0000255" key="1">
    <source>
        <dbReference type="HAMAP-Rule" id="MF_01309"/>
    </source>
</evidence>
<evidence type="ECO:0000305" key="2"/>
<keyword id="KW-0687">Ribonucleoprotein</keyword>
<keyword id="KW-0689">Ribosomal protein</keyword>
<keyword id="KW-0694">RNA-binding</keyword>
<keyword id="KW-0699">rRNA-binding</keyword>
<dbReference type="EMBL" id="FM178379">
    <property type="protein sequence ID" value="CAQ78011.1"/>
    <property type="molecule type" value="Genomic_DNA"/>
</dbReference>
<dbReference type="RefSeq" id="WP_012549156.1">
    <property type="nucleotide sequence ID" value="NC_011312.1"/>
</dbReference>
<dbReference type="SMR" id="B6EPT1"/>
<dbReference type="KEGG" id="vsa:VSAL_I0326"/>
<dbReference type="eggNOG" id="COG0092">
    <property type="taxonomic scope" value="Bacteria"/>
</dbReference>
<dbReference type="HOGENOM" id="CLU_058591_0_2_6"/>
<dbReference type="Proteomes" id="UP000001730">
    <property type="component" value="Chromosome 1"/>
</dbReference>
<dbReference type="GO" id="GO:0022627">
    <property type="term" value="C:cytosolic small ribosomal subunit"/>
    <property type="evidence" value="ECO:0007669"/>
    <property type="project" value="TreeGrafter"/>
</dbReference>
<dbReference type="GO" id="GO:0003729">
    <property type="term" value="F:mRNA binding"/>
    <property type="evidence" value="ECO:0007669"/>
    <property type="project" value="UniProtKB-UniRule"/>
</dbReference>
<dbReference type="GO" id="GO:0019843">
    <property type="term" value="F:rRNA binding"/>
    <property type="evidence" value="ECO:0007669"/>
    <property type="project" value="UniProtKB-UniRule"/>
</dbReference>
<dbReference type="GO" id="GO:0003735">
    <property type="term" value="F:structural constituent of ribosome"/>
    <property type="evidence" value="ECO:0007669"/>
    <property type="project" value="InterPro"/>
</dbReference>
<dbReference type="GO" id="GO:0006412">
    <property type="term" value="P:translation"/>
    <property type="evidence" value="ECO:0007669"/>
    <property type="project" value="UniProtKB-UniRule"/>
</dbReference>
<dbReference type="CDD" id="cd02412">
    <property type="entry name" value="KH-II_30S_S3"/>
    <property type="match status" value="1"/>
</dbReference>
<dbReference type="FunFam" id="3.30.1140.32:FF:000001">
    <property type="entry name" value="30S ribosomal protein S3"/>
    <property type="match status" value="1"/>
</dbReference>
<dbReference type="FunFam" id="3.30.300.20:FF:000001">
    <property type="entry name" value="30S ribosomal protein S3"/>
    <property type="match status" value="1"/>
</dbReference>
<dbReference type="Gene3D" id="3.30.300.20">
    <property type="match status" value="1"/>
</dbReference>
<dbReference type="Gene3D" id="3.30.1140.32">
    <property type="entry name" value="Ribosomal protein S3, C-terminal domain"/>
    <property type="match status" value="1"/>
</dbReference>
<dbReference type="HAMAP" id="MF_01309_B">
    <property type="entry name" value="Ribosomal_uS3_B"/>
    <property type="match status" value="1"/>
</dbReference>
<dbReference type="InterPro" id="IPR004087">
    <property type="entry name" value="KH_dom"/>
</dbReference>
<dbReference type="InterPro" id="IPR015946">
    <property type="entry name" value="KH_dom-like_a/b"/>
</dbReference>
<dbReference type="InterPro" id="IPR004044">
    <property type="entry name" value="KH_dom_type_2"/>
</dbReference>
<dbReference type="InterPro" id="IPR009019">
    <property type="entry name" value="KH_sf_prok-type"/>
</dbReference>
<dbReference type="InterPro" id="IPR036419">
    <property type="entry name" value="Ribosomal_S3_C_sf"/>
</dbReference>
<dbReference type="InterPro" id="IPR005704">
    <property type="entry name" value="Ribosomal_uS3_bac-typ"/>
</dbReference>
<dbReference type="InterPro" id="IPR001351">
    <property type="entry name" value="Ribosomal_uS3_C"/>
</dbReference>
<dbReference type="InterPro" id="IPR018280">
    <property type="entry name" value="Ribosomal_uS3_CS"/>
</dbReference>
<dbReference type="NCBIfam" id="TIGR01009">
    <property type="entry name" value="rpsC_bact"/>
    <property type="match status" value="1"/>
</dbReference>
<dbReference type="PANTHER" id="PTHR11760">
    <property type="entry name" value="30S/40S RIBOSOMAL PROTEIN S3"/>
    <property type="match status" value="1"/>
</dbReference>
<dbReference type="PANTHER" id="PTHR11760:SF19">
    <property type="entry name" value="SMALL RIBOSOMAL SUBUNIT PROTEIN US3C"/>
    <property type="match status" value="1"/>
</dbReference>
<dbReference type="Pfam" id="PF07650">
    <property type="entry name" value="KH_2"/>
    <property type="match status" value="1"/>
</dbReference>
<dbReference type="Pfam" id="PF00189">
    <property type="entry name" value="Ribosomal_S3_C"/>
    <property type="match status" value="1"/>
</dbReference>
<dbReference type="SMART" id="SM00322">
    <property type="entry name" value="KH"/>
    <property type="match status" value="1"/>
</dbReference>
<dbReference type="SUPFAM" id="SSF54814">
    <property type="entry name" value="Prokaryotic type KH domain (KH-domain type II)"/>
    <property type="match status" value="1"/>
</dbReference>
<dbReference type="SUPFAM" id="SSF54821">
    <property type="entry name" value="Ribosomal protein S3 C-terminal domain"/>
    <property type="match status" value="1"/>
</dbReference>
<dbReference type="PROSITE" id="PS50823">
    <property type="entry name" value="KH_TYPE_2"/>
    <property type="match status" value="1"/>
</dbReference>
<dbReference type="PROSITE" id="PS00548">
    <property type="entry name" value="RIBOSOMAL_S3"/>
    <property type="match status" value="1"/>
</dbReference>
<feature type="chain" id="PRO_1000140918" description="Small ribosomal subunit protein uS3">
    <location>
        <begin position="1"/>
        <end position="232"/>
    </location>
</feature>
<feature type="domain" description="KH type-2" evidence="1">
    <location>
        <begin position="39"/>
        <end position="107"/>
    </location>
</feature>
<gene>
    <name evidence="1" type="primary">rpsC</name>
    <name type="ordered locus">VSAL_I0326</name>
</gene>
<proteinExistence type="inferred from homology"/>
<reference key="1">
    <citation type="journal article" date="2008" name="BMC Genomics">
        <title>The genome sequence of the fish pathogen Aliivibrio salmonicida strain LFI1238 shows extensive evidence of gene decay.</title>
        <authorList>
            <person name="Hjerde E."/>
            <person name="Lorentzen M.S."/>
            <person name="Holden M.T."/>
            <person name="Seeger K."/>
            <person name="Paulsen S."/>
            <person name="Bason N."/>
            <person name="Churcher C."/>
            <person name="Harris D."/>
            <person name="Norbertczak H."/>
            <person name="Quail M.A."/>
            <person name="Sanders S."/>
            <person name="Thurston S."/>
            <person name="Parkhill J."/>
            <person name="Willassen N.P."/>
            <person name="Thomson N.R."/>
        </authorList>
    </citation>
    <scope>NUCLEOTIDE SEQUENCE [LARGE SCALE GENOMIC DNA]</scope>
    <source>
        <strain>LFI1238</strain>
    </source>
</reference>
<accession>B6EPT1</accession>
<organism>
    <name type="scientific">Aliivibrio salmonicida (strain LFI1238)</name>
    <name type="common">Vibrio salmonicida (strain LFI1238)</name>
    <dbReference type="NCBI Taxonomy" id="316275"/>
    <lineage>
        <taxon>Bacteria</taxon>
        <taxon>Pseudomonadati</taxon>
        <taxon>Pseudomonadota</taxon>
        <taxon>Gammaproteobacteria</taxon>
        <taxon>Vibrionales</taxon>
        <taxon>Vibrionaceae</taxon>
        <taxon>Aliivibrio</taxon>
    </lineage>
</organism>
<comment type="function">
    <text evidence="1">Binds the lower part of the 30S subunit head. Binds mRNA in the 70S ribosome, positioning it for translation.</text>
</comment>
<comment type="subunit">
    <text evidence="1">Part of the 30S ribosomal subunit. Forms a tight complex with proteins S10 and S14.</text>
</comment>
<comment type="similarity">
    <text evidence="1">Belongs to the universal ribosomal protein uS3 family.</text>
</comment>
<protein>
    <recommendedName>
        <fullName evidence="1">Small ribosomal subunit protein uS3</fullName>
    </recommendedName>
    <alternativeName>
        <fullName evidence="2">30S ribosomal protein S3</fullName>
    </alternativeName>
</protein>
<sequence>MGQKVHPNGIRLGIVKPWNATWFASSQEFADNLDGDFKVRQYLTKELKKASLSRIVIERPAKSIRVTIHTARPGVVIGKKGEDVEKLRAGVAKIAGVPAQINIAEVRKPELDAHLVADSIASQLERRVMFRRAMKRAVQNAMRLGAQGIKVQVGGRLGGAEIARSEWYREGRVPLHTLRADIDYATASAHTQYGVIGVKVWIFKGEVLGGMPAANAVEPKADKPKKQRRSRK</sequence>